<name>I1B6_CONAL</name>
<sequence>GDWGTCSWPGQECEHDSDCCGSFCCVGRRCLHIYFPCNLSRS</sequence>
<reference key="1">
    <citation type="journal article" date="2008" name="Toxicon">
        <title>I(1)-superfamily conotoxins and prediction of single D-amino acid occurrence.</title>
        <authorList>
            <person name="Buczek O."/>
            <person name="Jimenez E.C."/>
            <person name="Yoshikami D."/>
            <person name="Imperial J.S."/>
            <person name="Watkins M."/>
            <person name="Morrison A."/>
            <person name="Olivera B.M."/>
        </authorList>
    </citation>
    <scope>NUCLEOTIDE SEQUENCE [MRNA]</scope>
    <source>
        <tissue>Venom duct</tissue>
    </source>
</reference>
<organism>
    <name type="scientific">Conus aulicus</name>
    <name type="common">Princely cone</name>
    <dbReference type="NCBI Taxonomy" id="89437"/>
    <lineage>
        <taxon>Eukaryota</taxon>
        <taxon>Metazoa</taxon>
        <taxon>Spiralia</taxon>
        <taxon>Lophotrochozoa</taxon>
        <taxon>Mollusca</taxon>
        <taxon>Gastropoda</taxon>
        <taxon>Caenogastropoda</taxon>
        <taxon>Neogastropoda</taxon>
        <taxon>Conoidea</taxon>
        <taxon>Conidae</taxon>
        <taxon>Conus</taxon>
        <taxon>Darioconus</taxon>
    </lineage>
</organism>
<accession>P0C608</accession>
<evidence type="ECO:0000250" key="1"/>
<evidence type="ECO:0000250" key="2">
    <source>
        <dbReference type="UniProtKB" id="Q7Z094"/>
    </source>
</evidence>
<evidence type="ECO:0000305" key="3"/>
<protein>
    <recommendedName>
        <fullName>Conotoxin Au11.6</fullName>
    </recommendedName>
</protein>
<feature type="chain" id="PRO_0000314084" description="Conotoxin Au11.6">
    <location>
        <begin position="1"/>
        <end position="42"/>
    </location>
</feature>
<feature type="disulfide bond" evidence="2">
    <location>
        <begin position="6"/>
        <end position="20"/>
    </location>
</feature>
<feature type="disulfide bond" evidence="2">
    <location>
        <begin position="13"/>
        <end position="25"/>
    </location>
</feature>
<feature type="disulfide bond" evidence="2">
    <location>
        <begin position="19"/>
        <end position="30"/>
    </location>
</feature>
<feature type="disulfide bond" evidence="2">
    <location>
        <begin position="24"/>
        <end position="37"/>
    </location>
</feature>
<dbReference type="SMR" id="P0C608"/>
<dbReference type="ConoServer" id="2808">
    <property type="toxin name" value="Au11.6"/>
</dbReference>
<dbReference type="GO" id="GO:0005576">
    <property type="term" value="C:extracellular region"/>
    <property type="evidence" value="ECO:0007669"/>
    <property type="project" value="UniProtKB-SubCell"/>
</dbReference>
<dbReference type="GO" id="GO:0099106">
    <property type="term" value="F:ion channel regulator activity"/>
    <property type="evidence" value="ECO:0007669"/>
    <property type="project" value="UniProtKB-KW"/>
</dbReference>
<dbReference type="GO" id="GO:0090729">
    <property type="term" value="F:toxin activity"/>
    <property type="evidence" value="ECO:0007669"/>
    <property type="project" value="UniProtKB-KW"/>
</dbReference>
<dbReference type="PROSITE" id="PS60019">
    <property type="entry name" value="I_CONOTOXIN"/>
    <property type="match status" value="1"/>
</dbReference>
<comment type="subcellular location">
    <subcellularLocation>
        <location evidence="1">Secreted</location>
    </subcellularLocation>
</comment>
<comment type="tissue specificity">
    <text>Expressed by the venom duct.</text>
</comment>
<comment type="domain">
    <text>The cysteine framework is XI (C-C-CC-CC-C-C).</text>
</comment>
<comment type="similarity">
    <text evidence="3">Belongs to the conotoxin I1 superfamily.</text>
</comment>
<proteinExistence type="evidence at transcript level"/>
<keyword id="KW-1015">Disulfide bond</keyword>
<keyword id="KW-0872">Ion channel impairing toxin</keyword>
<keyword id="KW-0528">Neurotoxin</keyword>
<keyword id="KW-0964">Secreted</keyword>
<keyword id="KW-0800">Toxin</keyword>